<feature type="chain" id="PRO_1000132874" description="Large ribosomal subunit protein uL11">
    <location>
        <begin position="1"/>
        <end position="143"/>
    </location>
</feature>
<name>RL11_BURM1</name>
<protein>
    <recommendedName>
        <fullName evidence="1">Large ribosomal subunit protein uL11</fullName>
    </recommendedName>
    <alternativeName>
        <fullName evidence="2">50S ribosomal protein L11</fullName>
    </alternativeName>
</protein>
<gene>
    <name evidence="1" type="primary">rplK</name>
    <name type="ordered locus">Bmul_0237</name>
    <name type="ordered locus">BMULJ_03017</name>
</gene>
<proteinExistence type="inferred from homology"/>
<evidence type="ECO:0000255" key="1">
    <source>
        <dbReference type="HAMAP-Rule" id="MF_00736"/>
    </source>
</evidence>
<evidence type="ECO:0000305" key="2"/>
<organism>
    <name type="scientific">Burkholderia multivorans (strain ATCC 17616 / 249)</name>
    <dbReference type="NCBI Taxonomy" id="395019"/>
    <lineage>
        <taxon>Bacteria</taxon>
        <taxon>Pseudomonadati</taxon>
        <taxon>Pseudomonadota</taxon>
        <taxon>Betaproteobacteria</taxon>
        <taxon>Burkholderiales</taxon>
        <taxon>Burkholderiaceae</taxon>
        <taxon>Burkholderia</taxon>
        <taxon>Burkholderia cepacia complex</taxon>
    </lineage>
</organism>
<keyword id="KW-0488">Methylation</keyword>
<keyword id="KW-1185">Reference proteome</keyword>
<keyword id="KW-0687">Ribonucleoprotein</keyword>
<keyword id="KW-0689">Ribosomal protein</keyword>
<keyword id="KW-0694">RNA-binding</keyword>
<keyword id="KW-0699">rRNA-binding</keyword>
<reference key="1">
    <citation type="submission" date="2007-10" db="EMBL/GenBank/DDBJ databases">
        <title>Complete sequence of chromosome 1 of Burkholderia multivorans ATCC 17616.</title>
        <authorList>
            <person name="Copeland A."/>
            <person name="Lucas S."/>
            <person name="Lapidus A."/>
            <person name="Barry K."/>
            <person name="Glavina del Rio T."/>
            <person name="Dalin E."/>
            <person name="Tice H."/>
            <person name="Pitluck S."/>
            <person name="Chain P."/>
            <person name="Malfatti S."/>
            <person name="Shin M."/>
            <person name="Vergez L."/>
            <person name="Schmutz J."/>
            <person name="Larimer F."/>
            <person name="Land M."/>
            <person name="Hauser L."/>
            <person name="Kyrpides N."/>
            <person name="Kim E."/>
            <person name="Tiedje J."/>
            <person name="Richardson P."/>
        </authorList>
    </citation>
    <scope>NUCLEOTIDE SEQUENCE [LARGE SCALE GENOMIC DNA]</scope>
    <source>
        <strain>ATCC 17616 / 249</strain>
    </source>
</reference>
<reference key="2">
    <citation type="submission" date="2007-04" db="EMBL/GenBank/DDBJ databases">
        <title>Complete genome sequence of Burkholderia multivorans ATCC 17616.</title>
        <authorList>
            <person name="Ohtsubo Y."/>
            <person name="Yamashita A."/>
            <person name="Kurokawa K."/>
            <person name="Takami H."/>
            <person name="Yuhara S."/>
            <person name="Nishiyama E."/>
            <person name="Endo R."/>
            <person name="Miyazaki R."/>
            <person name="Ono A."/>
            <person name="Yano K."/>
            <person name="Ito M."/>
            <person name="Sota M."/>
            <person name="Yuji N."/>
            <person name="Hattori M."/>
            <person name="Tsuda M."/>
        </authorList>
    </citation>
    <scope>NUCLEOTIDE SEQUENCE [LARGE SCALE GENOMIC DNA]</scope>
    <source>
        <strain>ATCC 17616 / 249</strain>
    </source>
</reference>
<dbReference type="EMBL" id="CP000868">
    <property type="protein sequence ID" value="ABX13932.1"/>
    <property type="molecule type" value="Genomic_DNA"/>
</dbReference>
<dbReference type="EMBL" id="AP009385">
    <property type="protein sequence ID" value="BAG44902.1"/>
    <property type="molecule type" value="Genomic_DNA"/>
</dbReference>
<dbReference type="RefSeq" id="WP_006400671.1">
    <property type="nucleotide sequence ID" value="NC_010804.1"/>
</dbReference>
<dbReference type="SMR" id="A9ADI1"/>
<dbReference type="STRING" id="395019.BMULJ_03017"/>
<dbReference type="GeneID" id="98108181"/>
<dbReference type="KEGG" id="bmj:BMULJ_03017"/>
<dbReference type="KEGG" id="bmu:Bmul_0237"/>
<dbReference type="eggNOG" id="COG0080">
    <property type="taxonomic scope" value="Bacteria"/>
</dbReference>
<dbReference type="HOGENOM" id="CLU_074237_2_0_4"/>
<dbReference type="Proteomes" id="UP000008815">
    <property type="component" value="Chromosome 1"/>
</dbReference>
<dbReference type="GO" id="GO:0022625">
    <property type="term" value="C:cytosolic large ribosomal subunit"/>
    <property type="evidence" value="ECO:0007669"/>
    <property type="project" value="TreeGrafter"/>
</dbReference>
<dbReference type="GO" id="GO:0070180">
    <property type="term" value="F:large ribosomal subunit rRNA binding"/>
    <property type="evidence" value="ECO:0007669"/>
    <property type="project" value="UniProtKB-UniRule"/>
</dbReference>
<dbReference type="GO" id="GO:0003735">
    <property type="term" value="F:structural constituent of ribosome"/>
    <property type="evidence" value="ECO:0007669"/>
    <property type="project" value="InterPro"/>
</dbReference>
<dbReference type="GO" id="GO:0006412">
    <property type="term" value="P:translation"/>
    <property type="evidence" value="ECO:0007669"/>
    <property type="project" value="UniProtKB-UniRule"/>
</dbReference>
<dbReference type="CDD" id="cd00349">
    <property type="entry name" value="Ribosomal_L11"/>
    <property type="match status" value="1"/>
</dbReference>
<dbReference type="FunFam" id="1.10.10.250:FF:000001">
    <property type="entry name" value="50S ribosomal protein L11"/>
    <property type="match status" value="1"/>
</dbReference>
<dbReference type="FunFam" id="3.30.1550.10:FF:000001">
    <property type="entry name" value="50S ribosomal protein L11"/>
    <property type="match status" value="1"/>
</dbReference>
<dbReference type="Gene3D" id="1.10.10.250">
    <property type="entry name" value="Ribosomal protein L11, C-terminal domain"/>
    <property type="match status" value="1"/>
</dbReference>
<dbReference type="Gene3D" id="3.30.1550.10">
    <property type="entry name" value="Ribosomal protein L11/L12, N-terminal domain"/>
    <property type="match status" value="1"/>
</dbReference>
<dbReference type="HAMAP" id="MF_00736">
    <property type="entry name" value="Ribosomal_uL11"/>
    <property type="match status" value="1"/>
</dbReference>
<dbReference type="InterPro" id="IPR000911">
    <property type="entry name" value="Ribosomal_uL11"/>
</dbReference>
<dbReference type="InterPro" id="IPR006519">
    <property type="entry name" value="Ribosomal_uL11_bac-typ"/>
</dbReference>
<dbReference type="InterPro" id="IPR020783">
    <property type="entry name" value="Ribosomal_uL11_C"/>
</dbReference>
<dbReference type="InterPro" id="IPR036769">
    <property type="entry name" value="Ribosomal_uL11_C_sf"/>
</dbReference>
<dbReference type="InterPro" id="IPR020785">
    <property type="entry name" value="Ribosomal_uL11_CS"/>
</dbReference>
<dbReference type="InterPro" id="IPR020784">
    <property type="entry name" value="Ribosomal_uL11_N"/>
</dbReference>
<dbReference type="InterPro" id="IPR036796">
    <property type="entry name" value="Ribosomal_uL11_N_sf"/>
</dbReference>
<dbReference type="NCBIfam" id="TIGR01632">
    <property type="entry name" value="L11_bact"/>
    <property type="match status" value="1"/>
</dbReference>
<dbReference type="PANTHER" id="PTHR11661">
    <property type="entry name" value="60S RIBOSOMAL PROTEIN L12"/>
    <property type="match status" value="1"/>
</dbReference>
<dbReference type="PANTHER" id="PTHR11661:SF1">
    <property type="entry name" value="LARGE RIBOSOMAL SUBUNIT PROTEIN UL11M"/>
    <property type="match status" value="1"/>
</dbReference>
<dbReference type="Pfam" id="PF00298">
    <property type="entry name" value="Ribosomal_L11"/>
    <property type="match status" value="1"/>
</dbReference>
<dbReference type="Pfam" id="PF03946">
    <property type="entry name" value="Ribosomal_L11_N"/>
    <property type="match status" value="1"/>
</dbReference>
<dbReference type="SMART" id="SM00649">
    <property type="entry name" value="RL11"/>
    <property type="match status" value="1"/>
</dbReference>
<dbReference type="SUPFAM" id="SSF54747">
    <property type="entry name" value="Ribosomal L11/L12e N-terminal domain"/>
    <property type="match status" value="1"/>
</dbReference>
<dbReference type="SUPFAM" id="SSF46906">
    <property type="entry name" value="Ribosomal protein L11, C-terminal domain"/>
    <property type="match status" value="1"/>
</dbReference>
<dbReference type="PROSITE" id="PS00359">
    <property type="entry name" value="RIBOSOMAL_L11"/>
    <property type="match status" value="1"/>
</dbReference>
<sequence>MAKKIVGFIKLQIPAGKANPSPPVGPALGQRGLNIMEFCKAFNAQTQGMEPGLPVPVVITAYADKSFTFVMKTPPATVLIKKAAKVDKGSSKPHTDKVGSITRAQAEEIAKTKMPDLTAADLDAAVRTIAGSARSMGITVEGV</sequence>
<comment type="function">
    <text evidence="1">Forms part of the ribosomal stalk which helps the ribosome interact with GTP-bound translation factors.</text>
</comment>
<comment type="subunit">
    <text evidence="1">Part of the ribosomal stalk of the 50S ribosomal subunit. Interacts with L10 and the large rRNA to form the base of the stalk. L10 forms an elongated spine to which L12 dimers bind in a sequential fashion forming a multimeric L10(L12)X complex.</text>
</comment>
<comment type="PTM">
    <text evidence="1">One or more lysine residues are methylated.</text>
</comment>
<comment type="similarity">
    <text evidence="1">Belongs to the universal ribosomal protein uL11 family.</text>
</comment>
<accession>A9ADI1</accession>